<gene>
    <name evidence="1" type="primary">rbfA</name>
    <name type="ordered locus">FTT_0051</name>
</gene>
<reference key="1">
    <citation type="journal article" date="2005" name="Nat. Genet.">
        <title>The complete genome sequence of Francisella tularensis, the causative agent of tularemia.</title>
        <authorList>
            <person name="Larsson P."/>
            <person name="Oyston P.C.F."/>
            <person name="Chain P."/>
            <person name="Chu M.C."/>
            <person name="Duffield M."/>
            <person name="Fuxelius H.-H."/>
            <person name="Garcia E."/>
            <person name="Haelltorp G."/>
            <person name="Johansson D."/>
            <person name="Isherwood K.E."/>
            <person name="Karp P.D."/>
            <person name="Larsson E."/>
            <person name="Liu Y."/>
            <person name="Michell S."/>
            <person name="Prior J."/>
            <person name="Prior R."/>
            <person name="Malfatti S."/>
            <person name="Sjoestedt A."/>
            <person name="Svensson K."/>
            <person name="Thompson N."/>
            <person name="Vergez L."/>
            <person name="Wagg J.K."/>
            <person name="Wren B.W."/>
            <person name="Lindler L.E."/>
            <person name="Andersson S.G.E."/>
            <person name="Forsman M."/>
            <person name="Titball R.W."/>
        </authorList>
    </citation>
    <scope>NUCLEOTIDE SEQUENCE [LARGE SCALE GENOMIC DNA]</scope>
    <source>
        <strain>SCHU S4 / Schu 4</strain>
    </source>
</reference>
<evidence type="ECO:0000255" key="1">
    <source>
        <dbReference type="HAMAP-Rule" id="MF_00003"/>
    </source>
</evidence>
<evidence type="ECO:0000256" key="2">
    <source>
        <dbReference type="SAM" id="MobiDB-lite"/>
    </source>
</evidence>
<sequence length="143" mass="16416">MAAEGRVQRVASEFQKVISLLLRTRIKDAKLASATITEVDLSKDLSYAKIYYTCLAIEDAEYIDKAFEKSKGFFRSSIAKSLSLRIVPNLKFIYDTSLDYGMQMEEKIQQALEADSKIIKQDDKSLQENYKQNDKETKAEKLR</sequence>
<accession>Q5NIL6</accession>
<organism>
    <name type="scientific">Francisella tularensis subsp. tularensis (strain SCHU S4 / Schu 4)</name>
    <dbReference type="NCBI Taxonomy" id="177416"/>
    <lineage>
        <taxon>Bacteria</taxon>
        <taxon>Pseudomonadati</taxon>
        <taxon>Pseudomonadota</taxon>
        <taxon>Gammaproteobacteria</taxon>
        <taxon>Thiotrichales</taxon>
        <taxon>Francisellaceae</taxon>
        <taxon>Francisella</taxon>
    </lineage>
</organism>
<comment type="function">
    <text evidence="1">One of several proteins that assist in the late maturation steps of the functional core of the 30S ribosomal subunit. Associates with free 30S ribosomal subunits (but not with 30S subunits that are part of 70S ribosomes or polysomes). Required for efficient processing of 16S rRNA. May interact with the 5'-terminal helix region of 16S rRNA.</text>
</comment>
<comment type="subunit">
    <text evidence="1">Monomer. Binds 30S ribosomal subunits, but not 50S ribosomal subunits or 70S ribosomes.</text>
</comment>
<comment type="subcellular location">
    <subcellularLocation>
        <location evidence="1">Cytoplasm</location>
    </subcellularLocation>
</comment>
<comment type="similarity">
    <text evidence="1">Belongs to the RbfA family.</text>
</comment>
<dbReference type="EMBL" id="AJ749949">
    <property type="protein sequence ID" value="CAG44684.1"/>
    <property type="molecule type" value="Genomic_DNA"/>
</dbReference>
<dbReference type="RefSeq" id="WP_003017352.1">
    <property type="nucleotide sequence ID" value="NZ_CP010290.1"/>
</dbReference>
<dbReference type="RefSeq" id="YP_169126.1">
    <property type="nucleotide sequence ID" value="NC_006570.2"/>
</dbReference>
<dbReference type="SMR" id="Q5NIL6"/>
<dbReference type="STRING" id="177416.FTT_0051"/>
<dbReference type="DNASU" id="3191646"/>
<dbReference type="EnsemblBacteria" id="CAG44684">
    <property type="protein sequence ID" value="CAG44684"/>
    <property type="gene ID" value="FTT_0051"/>
</dbReference>
<dbReference type="KEGG" id="ftu:FTT_0051"/>
<dbReference type="eggNOG" id="COG0858">
    <property type="taxonomic scope" value="Bacteria"/>
</dbReference>
<dbReference type="OrthoDB" id="307788at2"/>
<dbReference type="Proteomes" id="UP000001174">
    <property type="component" value="Chromosome"/>
</dbReference>
<dbReference type="GO" id="GO:0005829">
    <property type="term" value="C:cytosol"/>
    <property type="evidence" value="ECO:0007669"/>
    <property type="project" value="TreeGrafter"/>
</dbReference>
<dbReference type="GO" id="GO:0043024">
    <property type="term" value="F:ribosomal small subunit binding"/>
    <property type="evidence" value="ECO:0007669"/>
    <property type="project" value="TreeGrafter"/>
</dbReference>
<dbReference type="GO" id="GO:0030490">
    <property type="term" value="P:maturation of SSU-rRNA"/>
    <property type="evidence" value="ECO:0007669"/>
    <property type="project" value="UniProtKB-UniRule"/>
</dbReference>
<dbReference type="Gene3D" id="3.30.300.20">
    <property type="match status" value="1"/>
</dbReference>
<dbReference type="HAMAP" id="MF_00003">
    <property type="entry name" value="RbfA"/>
    <property type="match status" value="1"/>
</dbReference>
<dbReference type="InterPro" id="IPR015946">
    <property type="entry name" value="KH_dom-like_a/b"/>
</dbReference>
<dbReference type="InterPro" id="IPR000238">
    <property type="entry name" value="RbfA"/>
</dbReference>
<dbReference type="InterPro" id="IPR023799">
    <property type="entry name" value="RbfA_dom_sf"/>
</dbReference>
<dbReference type="InterPro" id="IPR020053">
    <property type="entry name" value="Ribosome-bd_factorA_CS"/>
</dbReference>
<dbReference type="NCBIfam" id="TIGR00082">
    <property type="entry name" value="rbfA"/>
    <property type="match status" value="1"/>
</dbReference>
<dbReference type="PANTHER" id="PTHR33515">
    <property type="entry name" value="RIBOSOME-BINDING FACTOR A, CHLOROPLASTIC-RELATED"/>
    <property type="match status" value="1"/>
</dbReference>
<dbReference type="PANTHER" id="PTHR33515:SF1">
    <property type="entry name" value="RIBOSOME-BINDING FACTOR A, CHLOROPLASTIC-RELATED"/>
    <property type="match status" value="1"/>
</dbReference>
<dbReference type="Pfam" id="PF02033">
    <property type="entry name" value="RBFA"/>
    <property type="match status" value="1"/>
</dbReference>
<dbReference type="SUPFAM" id="SSF89919">
    <property type="entry name" value="Ribosome-binding factor A, RbfA"/>
    <property type="match status" value="1"/>
</dbReference>
<dbReference type="PROSITE" id="PS01319">
    <property type="entry name" value="RBFA"/>
    <property type="match status" value="1"/>
</dbReference>
<keyword id="KW-0963">Cytoplasm</keyword>
<keyword id="KW-1185">Reference proteome</keyword>
<keyword id="KW-0690">Ribosome biogenesis</keyword>
<proteinExistence type="inferred from homology"/>
<feature type="chain" id="PRO_0000102663" description="Ribosome-binding factor A">
    <location>
        <begin position="1"/>
        <end position="143"/>
    </location>
</feature>
<feature type="region of interest" description="Disordered" evidence="2">
    <location>
        <begin position="123"/>
        <end position="143"/>
    </location>
</feature>
<name>RBFA_FRATT</name>
<protein>
    <recommendedName>
        <fullName evidence="1">Ribosome-binding factor A</fullName>
    </recommendedName>
</protein>